<feature type="chain" id="PRO_0000449162" description="Multifunctional dioxygenase prhA">
    <location>
        <begin position="1"/>
        <end position="301"/>
    </location>
</feature>
<feature type="binding site" evidence="4">
    <location>
        <position position="130"/>
    </location>
    <ligand>
        <name>Fe cation</name>
        <dbReference type="ChEBI" id="CHEBI:24875"/>
    </ligand>
</feature>
<feature type="binding site" evidence="4">
    <location>
        <position position="132"/>
    </location>
    <ligand>
        <name>Fe cation</name>
        <dbReference type="ChEBI" id="CHEBI:24875"/>
    </ligand>
</feature>
<feature type="binding site" evidence="4">
    <location>
        <position position="214"/>
    </location>
    <ligand>
        <name>Fe cation</name>
        <dbReference type="ChEBI" id="CHEBI:24875"/>
    </ligand>
</feature>
<feature type="site" description="Important for reaction specificity" evidence="4">
    <location>
        <position position="150"/>
    </location>
</feature>
<feature type="site" description="Important for reaction specificity" evidence="4">
    <location>
        <position position="232"/>
    </location>
</feature>
<feature type="mutagenesis site" description="Completely loses its original activity, and instead catalyzes the AusE-type 'spiro-lactone formation' to yield preaustinoid A3 as a single product; when associated with S-232." evidence="4">
    <original>V</original>
    <variation>L</variation>
    <location>
        <position position="150"/>
    </location>
</feature>
<feature type="mutagenesis site" description="Completely loses its original activity, and instead catalyzes the AusE-type 'spiro-lactone formation' to yield preaustinoid A3 as a single product; when associated with L-150." evidence="4">
    <original>A</original>
    <variation>S</variation>
    <location>
        <position position="232"/>
    </location>
</feature>
<feature type="strand" evidence="19">
    <location>
        <begin position="11"/>
        <end position="13"/>
    </location>
</feature>
<feature type="helix" evidence="19">
    <location>
        <begin position="18"/>
        <end position="28"/>
    </location>
</feature>
<feature type="strand" evidence="19">
    <location>
        <begin position="29"/>
        <end position="34"/>
    </location>
</feature>
<feature type="helix" evidence="19">
    <location>
        <begin position="39"/>
        <end position="55"/>
    </location>
</feature>
<feature type="helix" evidence="19">
    <location>
        <begin position="64"/>
        <end position="66"/>
    </location>
</feature>
<feature type="strand" evidence="19">
    <location>
        <begin position="69"/>
        <end position="73"/>
    </location>
</feature>
<feature type="helix" evidence="19">
    <location>
        <begin position="76"/>
        <end position="79"/>
    </location>
</feature>
<feature type="helix" evidence="19">
    <location>
        <begin position="81"/>
        <end position="85"/>
    </location>
</feature>
<feature type="helix" evidence="19">
    <location>
        <begin position="87"/>
        <end position="89"/>
    </location>
</feature>
<feature type="helix" evidence="19">
    <location>
        <begin position="91"/>
        <end position="101"/>
    </location>
</feature>
<feature type="turn" evidence="18">
    <location>
        <begin position="104"/>
        <end position="106"/>
    </location>
</feature>
<feature type="strand" evidence="19">
    <location>
        <begin position="110"/>
        <end position="120"/>
    </location>
</feature>
<feature type="helix" evidence="19">
    <location>
        <begin position="132"/>
        <end position="135"/>
    </location>
</feature>
<feature type="helix" evidence="19">
    <location>
        <begin position="139"/>
        <end position="145"/>
    </location>
</feature>
<feature type="strand" evidence="19">
    <location>
        <begin position="150"/>
        <end position="158"/>
    </location>
</feature>
<feature type="turn" evidence="19">
    <location>
        <begin position="162"/>
        <end position="165"/>
    </location>
</feature>
<feature type="strand" evidence="20">
    <location>
        <begin position="168"/>
        <end position="170"/>
    </location>
</feature>
<feature type="helix" evidence="19">
    <location>
        <begin position="173"/>
        <end position="175"/>
    </location>
</feature>
<feature type="turn" evidence="19">
    <location>
        <begin position="184"/>
        <end position="186"/>
    </location>
</feature>
<feature type="turn" evidence="19">
    <location>
        <begin position="188"/>
        <end position="191"/>
    </location>
</feature>
<feature type="strand" evidence="19">
    <location>
        <begin position="205"/>
        <end position="209"/>
    </location>
</feature>
<feature type="strand" evidence="20">
    <location>
        <begin position="212"/>
        <end position="215"/>
    </location>
</feature>
<feature type="strand" evidence="19">
    <location>
        <begin position="226"/>
        <end position="235"/>
    </location>
</feature>
<feature type="helix" evidence="19">
    <location>
        <begin position="244"/>
        <end position="247"/>
    </location>
</feature>
<feature type="helix" evidence="19">
    <location>
        <begin position="250"/>
        <end position="254"/>
    </location>
</feature>
<feature type="helix" evidence="19">
    <location>
        <begin position="258"/>
        <end position="263"/>
    </location>
</feature>
<feature type="strand" evidence="18">
    <location>
        <begin position="269"/>
        <end position="272"/>
    </location>
</feature>
<feature type="strand" evidence="19">
    <location>
        <begin position="279"/>
        <end position="283"/>
    </location>
</feature>
<feature type="helix" evidence="19">
    <location>
        <begin position="288"/>
        <end position="292"/>
    </location>
</feature>
<accession>A0A1E1FFL0</accession>
<comment type="function">
    <text evidence="2 3 4 7 8 9">Multifunctional dioxygenase; part of the gene cluster that mediates the biosynthesis of paraherquonin, a meroterpenoid with a unique, highly congested hexacyclic molecular architecture (PubMed:27602587). The first step of the pathway is the synthesis of 3,5-dimethylorsellinic acid (DMOA) by the polyketide synthase prhL (By similarity). Synthesis of DMOA is followed by farnesylation by the prenyltransferase prhE, methylesterification by the methyl-transferase prhM, epoxidation of the prenyl chain by the flavin-dependent monooxygenase prhF, and cyclization of the farnesyl moiety by the terpene cyclase prhH, to yield the tetracyclic intermediate, protoaustinoid A (By similarity). The short chain dehydrogenase prhI then oxidizes the C-3 alcohol group of the terpene cyclase product to transform protoaustinoid A into protoaustinoid B (PubMed:27602587). The FAD-binding monooxygenase prhJ catalyzes the oxidation of protoaustinoid B into preaustinoid A which is further oxidized into preaustinoid A1 by FAD-binding monooxygenase phrK (PubMed:27602587). Finally, prhA leads to berkeleydione via the berkeleyone B intermediate (PubMed:27602587, PubMed:29317628). PrhA is a multifunctional dioxygenase that first desaturates at C5-C6 to form berkeleyone B, followed by rearrangement of the A/B-ring to form the cycloheptadiene moiety in berkeleydione (PubMed:27602587, PubMed:29317628). Berkeleydione serves as the key intermediate for the biosynthesis of paraherquonin as well as many other meroterpenoids (Probable). The cytochrome P450 monooxygenases prhB, prhD, and prhN, as well as the isomerase prhC, are probably involved in the late stage of paraherquonin biosynthesis, after the production of berkeleydione (Probable). Especially prhC might be a multifunctional enzyme that catalyzes the D-ring expansion via intramolecular methoxy rearrangement, as well as the hydrolysis of the expanded D-ring (Probable).</text>
</comment>
<comment type="catalytic activity">
    <reaction evidence="3 4">
        <text>preaustinoid A1 + 2-oxoglutarate + O2 = berkeleyone B + succinate + CO2 + H2O</text>
        <dbReference type="Rhea" id="RHEA:65184"/>
        <dbReference type="ChEBI" id="CHEBI:15377"/>
        <dbReference type="ChEBI" id="CHEBI:15379"/>
        <dbReference type="ChEBI" id="CHEBI:16526"/>
        <dbReference type="ChEBI" id="CHEBI:16810"/>
        <dbReference type="ChEBI" id="CHEBI:30031"/>
        <dbReference type="ChEBI" id="CHEBI:69025"/>
        <dbReference type="ChEBI" id="CHEBI:69026"/>
    </reaction>
    <physiologicalReaction direction="left-to-right" evidence="3 4">
        <dbReference type="Rhea" id="RHEA:65185"/>
    </physiologicalReaction>
</comment>
<comment type="catalytic activity">
    <reaction evidence="3">
        <text>berkeleyone B + 2-oxoglutarate + O2 = berkeleydione + succinate + CO2 + H2O</text>
        <dbReference type="Rhea" id="RHEA:65188"/>
        <dbReference type="ChEBI" id="CHEBI:15377"/>
        <dbReference type="ChEBI" id="CHEBI:15379"/>
        <dbReference type="ChEBI" id="CHEBI:16526"/>
        <dbReference type="ChEBI" id="CHEBI:16810"/>
        <dbReference type="ChEBI" id="CHEBI:30031"/>
        <dbReference type="ChEBI" id="CHEBI:69021"/>
        <dbReference type="ChEBI" id="CHEBI:69025"/>
    </reaction>
    <physiologicalReaction direction="left-to-right" evidence="3">
        <dbReference type="Rhea" id="RHEA:65189"/>
    </physiologicalReaction>
</comment>
<comment type="catalytic activity">
    <reaction evidence="3">
        <text>preaustinoid A + 2 2-oxoglutarate + 2 O2 = berkeleytrione + 2 succinate + 2 CO2 + H2O</text>
        <dbReference type="Rhea" id="RHEA:65192"/>
        <dbReference type="ChEBI" id="CHEBI:15377"/>
        <dbReference type="ChEBI" id="CHEBI:15379"/>
        <dbReference type="ChEBI" id="CHEBI:16526"/>
        <dbReference type="ChEBI" id="CHEBI:16810"/>
        <dbReference type="ChEBI" id="CHEBI:30031"/>
        <dbReference type="ChEBI" id="CHEBI:69022"/>
        <dbReference type="ChEBI" id="CHEBI:69023"/>
    </reaction>
    <physiologicalReaction direction="left-to-right" evidence="3">
        <dbReference type="Rhea" id="RHEA:65193"/>
    </physiologicalReaction>
</comment>
<comment type="cofactor">
    <cofactor evidence="1">
        <name>Fe cation</name>
        <dbReference type="ChEBI" id="CHEBI:24875"/>
    </cofactor>
</comment>
<comment type="biophysicochemical properties">
    <kinetics>
        <KM evidence="4">48.3 uM for preaustinoid A1</KM>
    </kinetics>
</comment>
<comment type="pathway">
    <text evidence="3 4">Secondary metabolite biosynthesis; terpenoid biosynthesis.</text>
</comment>
<comment type="subunit">
    <text evidence="4">Homodimer.</text>
</comment>
<comment type="domain">
    <text evidence="4">Residues at positions 150 and 232 are important for type of reaction catalyzed, using identical substrate (PubMed:29317628). Both ausE and prhA accept preaustinoid A1 as a substrate to form divergent products through dynamic skeletal rearrangement. AusE (containing Leu-150 and Ser-232) first desaturates at C1-C2 to form preaustinoid A2,followed by rearrangement leading to the formation of the spiro-lactone in preaustinoid A3 (PubMed:29317628). In contrast, prhA (containing Val-150 and Ala-232) first desaturates at C5-C6 to form berkeleyone B, followed by rearrangement of the A/B-ring to form the cycloheptadiene moiety in berkeleydione (PubMed:29317628).</text>
</comment>
<comment type="similarity">
    <text evidence="6">Belongs to the PhyH family.</text>
</comment>
<sequence length="301" mass="33731">MAPMIPPRLQRFPATASADEIFAAFQEDGCVVIEGFISPEQVARFSQEVDPAMEKIPVEVTNNGNSNDRTKRFSKCVIASPTFRNEIIESDLMHELCDRVFSKPGEGMGYHFNDNMVIEVQPGAPAQRLHRDQELYPWWNSMGPAGPECVINFFCAVTPFTEENGATRLVPGSHLWPEFTQINERDCPQFGKIETVPAIMQPGDCYLMSGKVIHGAGHNATTTDRRRALALAIIRRELRPMQAFSLSVPMKLAREMSERSQTMFGFRSSVQHCDVDMVHFWGNDGKDIAHHLGLEAPSVHV</sequence>
<keyword id="KW-0002">3D-structure</keyword>
<keyword id="KW-0223">Dioxygenase</keyword>
<keyword id="KW-0408">Iron</keyword>
<keyword id="KW-0479">Metal-binding</keyword>
<keyword id="KW-0560">Oxidoreductase</keyword>
<reference key="1">
    <citation type="journal article" date="2016" name="J. Am. Chem. Soc.">
        <title>Discovery of key dioxygenases that diverged the paraherquonin and acetoxydehydroaustin pathways in Penicillium brasilianum.</title>
        <authorList>
            <person name="Matsuda Y."/>
            <person name="Iwabuchi T."/>
            <person name="Fujimoto T."/>
            <person name="Awakawa T."/>
            <person name="Nakashima Y."/>
            <person name="Mori T."/>
            <person name="Zhang H."/>
            <person name="Hayashi F."/>
            <person name="Abe I."/>
        </authorList>
    </citation>
    <scope>NUCLEOTIDE SEQUENCE [GENOMIC DNA]</scope>
    <scope>FUNCTION</scope>
    <scope>CATALYTIC ACTIVITY</scope>
    <scope>PATHWAY</scope>
    <source>
        <strain>ATCC 22354 / NBRC 6234 / CBS 338.59 / FRR 3454 / IMI 68220</strain>
    </source>
</reference>
<reference key="2">
    <citation type="journal article" date="2017" name="Nat. Chem. Biol.">
        <title>Molecular basis for the unusual ring reconstruction in fungal meroterpenoid biogenesis.</title>
        <authorList>
            <person name="Mori T."/>
            <person name="Iwabuchi T."/>
            <person name="Hoshino S."/>
            <person name="Wang H."/>
            <person name="Matsuda Y."/>
            <person name="Abe I."/>
        </authorList>
    </citation>
    <scope>FUNCTION</scope>
</reference>
<reference evidence="10 11 12 13 14 15 16 17" key="3">
    <citation type="journal article" date="2018" name="Nat. Commun.">
        <title>Structure function and engineering of multifunctional non-heme iron dependent oxygenases in fungal meroterpenoid biosynthesis.</title>
        <authorList>
            <person name="Nakashima Y."/>
            <person name="Mori T."/>
            <person name="Nakamura H."/>
            <person name="Awakawa T."/>
            <person name="Hoshino S."/>
            <person name="Senda M."/>
            <person name="Senda T."/>
            <person name="Abe I."/>
        </authorList>
    </citation>
    <scope>X-RAY CRYSTALLOGRAPHY (2.10 ANGSTROMS) OF 6-294</scope>
    <scope>SUBUNIT</scope>
    <scope>FUNCTION</scope>
    <scope>CATALYTIC ACTIVITY</scope>
    <scope>BIOPHYSICOCHEMICAL PROPERTIES</scope>
    <scope>MUTAGENESIS OF VAL-150 AND ALA-232</scope>
    <scope>PATHWAY</scope>
</reference>
<gene>
    <name evidence="5" type="primary">prhA</name>
</gene>
<name>PRHA_PENBI</name>
<dbReference type="EC" id="1.14.11.-" evidence="3 4"/>
<dbReference type="EMBL" id="LC127182">
    <property type="protein sequence ID" value="BAV69302.1"/>
    <property type="molecule type" value="Genomic_DNA"/>
</dbReference>
<dbReference type="PDB" id="5YBM">
    <property type="method" value="X-ray"/>
    <property type="resolution" value="2.12 A"/>
    <property type="chains" value="A/B=6-294"/>
</dbReference>
<dbReference type="PDB" id="5YBN">
    <property type="method" value="X-ray"/>
    <property type="resolution" value="2.10 A"/>
    <property type="chains" value="A/B=6-294"/>
</dbReference>
<dbReference type="PDB" id="5YBO">
    <property type="method" value="X-ray"/>
    <property type="resolution" value="2.20 A"/>
    <property type="chains" value="A/B=6-294"/>
</dbReference>
<dbReference type="PDB" id="5YBP">
    <property type="method" value="X-ray"/>
    <property type="resolution" value="2.31 A"/>
    <property type="chains" value="A/B=6-294"/>
</dbReference>
<dbReference type="PDB" id="5YBQ">
    <property type="method" value="X-ray"/>
    <property type="resolution" value="2.25 A"/>
    <property type="chains" value="A/B=6-294"/>
</dbReference>
<dbReference type="PDB" id="5YBR">
    <property type="method" value="X-ray"/>
    <property type="resolution" value="2.26 A"/>
    <property type="chains" value="A/B=6-294"/>
</dbReference>
<dbReference type="PDB" id="5YBS">
    <property type="method" value="X-ray"/>
    <property type="resolution" value="2.30 A"/>
    <property type="chains" value="A/B=6-294"/>
</dbReference>
<dbReference type="PDB" id="5YBT">
    <property type="method" value="X-ray"/>
    <property type="resolution" value="2.35 A"/>
    <property type="chains" value="A/B=6-294"/>
</dbReference>
<dbReference type="PDBsum" id="5YBM"/>
<dbReference type="PDBsum" id="5YBN"/>
<dbReference type="PDBsum" id="5YBO"/>
<dbReference type="PDBsum" id="5YBP"/>
<dbReference type="PDBsum" id="5YBQ"/>
<dbReference type="PDBsum" id="5YBR"/>
<dbReference type="PDBsum" id="5YBS"/>
<dbReference type="PDBsum" id="5YBT"/>
<dbReference type="SMR" id="A0A1E1FFL0"/>
<dbReference type="UniPathway" id="UPA00213"/>
<dbReference type="GO" id="GO:0051213">
    <property type="term" value="F:dioxygenase activity"/>
    <property type="evidence" value="ECO:0000314"/>
    <property type="project" value="GO_Central"/>
</dbReference>
<dbReference type="GO" id="GO:0046872">
    <property type="term" value="F:metal ion binding"/>
    <property type="evidence" value="ECO:0007669"/>
    <property type="project" value="UniProtKB-KW"/>
</dbReference>
<dbReference type="GO" id="GO:0140874">
    <property type="term" value="P:paraherquonin biosynthetic process"/>
    <property type="evidence" value="ECO:0000314"/>
    <property type="project" value="GO_Central"/>
</dbReference>
<dbReference type="Gene3D" id="2.60.120.620">
    <property type="entry name" value="q2cbj1_9rhob like domain"/>
    <property type="match status" value="1"/>
</dbReference>
<dbReference type="InterPro" id="IPR008775">
    <property type="entry name" value="Phytyl_CoA_dOase-like"/>
</dbReference>
<dbReference type="PANTHER" id="PTHR20883:SF19">
    <property type="entry name" value="MULTIFUNCTIONAL DIOXYGENASE AUSE"/>
    <property type="match status" value="1"/>
</dbReference>
<dbReference type="PANTHER" id="PTHR20883">
    <property type="entry name" value="PHYTANOYL-COA DIOXYGENASE DOMAIN CONTAINING 1"/>
    <property type="match status" value="1"/>
</dbReference>
<dbReference type="Pfam" id="PF05721">
    <property type="entry name" value="PhyH"/>
    <property type="match status" value="1"/>
</dbReference>
<dbReference type="SUPFAM" id="SSF51197">
    <property type="entry name" value="Clavaminate synthase-like"/>
    <property type="match status" value="1"/>
</dbReference>
<proteinExistence type="evidence at protein level"/>
<organism>
    <name type="scientific">Penicillium brasilianum</name>
    <dbReference type="NCBI Taxonomy" id="104259"/>
    <lineage>
        <taxon>Eukaryota</taxon>
        <taxon>Fungi</taxon>
        <taxon>Dikarya</taxon>
        <taxon>Ascomycota</taxon>
        <taxon>Pezizomycotina</taxon>
        <taxon>Eurotiomycetes</taxon>
        <taxon>Eurotiomycetidae</taxon>
        <taxon>Eurotiales</taxon>
        <taxon>Aspergillaceae</taxon>
        <taxon>Penicillium</taxon>
    </lineage>
</organism>
<protein>
    <recommendedName>
        <fullName evidence="5">Multifunctional dioxygenase prhA</fullName>
        <ecNumber evidence="3 4">1.14.11.-</ecNumber>
    </recommendedName>
    <alternativeName>
        <fullName evidence="5">Paraherquonin biosynthesis cluster protein A</fullName>
    </alternativeName>
</protein>
<evidence type="ECO:0000250" key="1">
    <source>
        <dbReference type="UniProtKB" id="Q4WAW9"/>
    </source>
</evidence>
<evidence type="ECO:0000250" key="2">
    <source>
        <dbReference type="UniProtKB" id="Q5ATJ7"/>
    </source>
</evidence>
<evidence type="ECO:0000269" key="3">
    <source>
    </source>
</evidence>
<evidence type="ECO:0000269" key="4">
    <source>
    </source>
</evidence>
<evidence type="ECO:0000303" key="5">
    <source>
    </source>
</evidence>
<evidence type="ECO:0000305" key="6"/>
<evidence type="ECO:0000305" key="7">
    <source>
    </source>
</evidence>
<evidence type="ECO:0000305" key="8">
    <source>
    </source>
</evidence>
<evidence type="ECO:0000305" key="9">
    <source>
    </source>
</evidence>
<evidence type="ECO:0007744" key="10">
    <source>
        <dbReference type="PDB" id="5YBM"/>
    </source>
</evidence>
<evidence type="ECO:0007744" key="11">
    <source>
        <dbReference type="PDB" id="5YBN"/>
    </source>
</evidence>
<evidence type="ECO:0007744" key="12">
    <source>
        <dbReference type="PDB" id="5YBO"/>
    </source>
</evidence>
<evidence type="ECO:0007744" key="13">
    <source>
        <dbReference type="PDB" id="5YBP"/>
    </source>
</evidence>
<evidence type="ECO:0007744" key="14">
    <source>
        <dbReference type="PDB" id="5YBQ"/>
    </source>
</evidence>
<evidence type="ECO:0007744" key="15">
    <source>
        <dbReference type="PDB" id="5YBR"/>
    </source>
</evidence>
<evidence type="ECO:0007744" key="16">
    <source>
        <dbReference type="PDB" id="5YBS"/>
    </source>
</evidence>
<evidence type="ECO:0007744" key="17">
    <source>
        <dbReference type="PDB" id="5YBT"/>
    </source>
</evidence>
<evidence type="ECO:0007829" key="18">
    <source>
        <dbReference type="PDB" id="5YBM"/>
    </source>
</evidence>
<evidence type="ECO:0007829" key="19">
    <source>
        <dbReference type="PDB" id="5YBN"/>
    </source>
</evidence>
<evidence type="ECO:0007829" key="20">
    <source>
        <dbReference type="PDB" id="5YBO"/>
    </source>
</evidence>